<organismHost>
    <name type="scientific">Ornithodoros</name>
    <name type="common">relapsing fever ticks</name>
    <dbReference type="NCBI Taxonomy" id="6937"/>
</organismHost>
<organismHost>
    <name type="scientific">Phacochoerus aethiopicus</name>
    <name type="common">Warthog</name>
    <dbReference type="NCBI Taxonomy" id="85517"/>
</organismHost>
<organismHost>
    <name type="scientific">Phacochoerus africanus</name>
    <name type="common">Warthog</name>
    <dbReference type="NCBI Taxonomy" id="41426"/>
</organismHost>
<organismHost>
    <name type="scientific">Potamochoerus larvatus</name>
    <name type="common">Bushpig</name>
    <dbReference type="NCBI Taxonomy" id="273792"/>
</organismHost>
<organismHost>
    <name type="scientific">Sus scrofa</name>
    <name type="common">Pig</name>
    <dbReference type="NCBI Taxonomy" id="9823"/>
</organismHost>
<proteinExistence type="inferred from homology"/>
<keyword id="KW-0945">Host-virus interaction</keyword>
<keyword id="KW-0378">Hydrolase</keyword>
<keyword id="KW-1090">Inhibition of host innate immune response by virus</keyword>
<keyword id="KW-1114">Inhibition of host interferon signaling pathway by virus</keyword>
<keyword id="KW-0922">Interferon antiviral system evasion</keyword>
<keyword id="KW-0426">Late protein</keyword>
<keyword id="KW-0899">Viral immunoevasion</keyword>
<name>VF364_ASFWA</name>
<reference key="1">
    <citation type="submission" date="2003-03" db="EMBL/GenBank/DDBJ databases">
        <title>African swine fever virus genomes.</title>
        <authorList>
            <person name="Kutish G.F."/>
            <person name="Rock D.L."/>
        </authorList>
    </citation>
    <scope>NUCLEOTIDE SEQUENCE [LARGE SCALE GENOMIC DNA]</scope>
</reference>
<organism>
    <name type="scientific">African swine fever virus (isolate Warthog/Namibia/Wart80/1980)</name>
    <name type="common">ASFV</name>
    <dbReference type="NCBI Taxonomy" id="561444"/>
    <lineage>
        <taxon>Viruses</taxon>
        <taxon>Varidnaviria</taxon>
        <taxon>Bamfordvirae</taxon>
        <taxon>Nucleocytoviricota</taxon>
        <taxon>Pokkesviricetes</taxon>
        <taxon>Asfuvirales</taxon>
        <taxon>Asfarviridae</taxon>
        <taxon>Asfivirus</taxon>
        <taxon>African swine fever virus</taxon>
    </lineage>
</organism>
<dbReference type="EC" id="3.1.4.-" evidence="1"/>
<dbReference type="EMBL" id="AY261366">
    <property type="status" value="NOT_ANNOTATED_CDS"/>
    <property type="molecule type" value="Genomic_DNA"/>
</dbReference>
<dbReference type="Proteomes" id="UP000000858">
    <property type="component" value="Segment"/>
</dbReference>
<dbReference type="GO" id="GO:0048476">
    <property type="term" value="C:Holliday junction resolvase complex"/>
    <property type="evidence" value="ECO:0007669"/>
    <property type="project" value="TreeGrafter"/>
</dbReference>
<dbReference type="GO" id="GO:0048257">
    <property type="term" value="F:3'-flap endonuclease activity"/>
    <property type="evidence" value="ECO:0007669"/>
    <property type="project" value="TreeGrafter"/>
</dbReference>
<dbReference type="GO" id="GO:0008821">
    <property type="term" value="F:crossover junction DNA endonuclease activity"/>
    <property type="evidence" value="ECO:0007669"/>
    <property type="project" value="InterPro"/>
</dbReference>
<dbReference type="GO" id="GO:0003677">
    <property type="term" value="F:DNA binding"/>
    <property type="evidence" value="ECO:0007669"/>
    <property type="project" value="InterPro"/>
</dbReference>
<dbReference type="GO" id="GO:0006308">
    <property type="term" value="P:DNA catabolic process"/>
    <property type="evidence" value="ECO:0007669"/>
    <property type="project" value="InterPro"/>
</dbReference>
<dbReference type="GO" id="GO:0000727">
    <property type="term" value="P:double-strand break repair via break-induced replication"/>
    <property type="evidence" value="ECO:0007669"/>
    <property type="project" value="TreeGrafter"/>
</dbReference>
<dbReference type="GO" id="GO:0052170">
    <property type="term" value="P:symbiont-mediated suppression of host innate immune response"/>
    <property type="evidence" value="ECO:0007669"/>
    <property type="project" value="UniProtKB-KW"/>
</dbReference>
<dbReference type="GO" id="GO:0039502">
    <property type="term" value="P:symbiont-mediated suppression of host type I interferon-mediated signaling pathway"/>
    <property type="evidence" value="ECO:0007669"/>
    <property type="project" value="UniProtKB-KW"/>
</dbReference>
<dbReference type="Gene3D" id="3.40.50.10130">
    <property type="match status" value="1"/>
</dbReference>
<dbReference type="InterPro" id="IPR006166">
    <property type="entry name" value="ERCC4_domain"/>
</dbReference>
<dbReference type="InterPro" id="IPR033309">
    <property type="entry name" value="Mus81"/>
</dbReference>
<dbReference type="InterPro" id="IPR011335">
    <property type="entry name" value="Restrct_endonuc-II-like"/>
</dbReference>
<dbReference type="PANTHER" id="PTHR13451">
    <property type="entry name" value="CLASS II CROSSOVER JUNCTION ENDONUCLEASE MUS81"/>
    <property type="match status" value="1"/>
</dbReference>
<dbReference type="PANTHER" id="PTHR13451:SF0">
    <property type="entry name" value="CROSSOVER JUNCTION ENDONUCLEASE MUS81"/>
    <property type="match status" value="1"/>
</dbReference>
<dbReference type="Pfam" id="PF02732">
    <property type="entry name" value="ERCC4"/>
    <property type="match status" value="1"/>
</dbReference>
<dbReference type="SUPFAM" id="SSF52980">
    <property type="entry name" value="Restriction endonuclease-like"/>
    <property type="match status" value="1"/>
</dbReference>
<accession>P0CAF9</accession>
<comment type="function">
    <text evidence="1">Plays a role in the inhibition of type I interferon signaling pathway. Mechanistically, specifically interacts with 2',3'-cGAMP and cleaves it via its phosphodiesterase activity. In turn, prevents 2',3'-cGAMP interaction with host ER-resident STING1 leading to inhibition of downstream signaling pathway and type I interferon production.</text>
</comment>
<comment type="induction">
    <text evidence="1">Expressed in the late phase of the viral replicative cycle.</text>
</comment>
<comment type="similarity">
    <text evidence="3">Belongs to the asfivirus EP364R family.</text>
</comment>
<evidence type="ECO:0000250" key="1">
    <source>
        <dbReference type="UniProtKB" id="Q65151"/>
    </source>
</evidence>
<evidence type="ECO:0000256" key="2">
    <source>
        <dbReference type="SAM" id="MobiDB-lite"/>
    </source>
</evidence>
<evidence type="ECO:0000305" key="3"/>
<protein>
    <recommendedName>
        <fullName>ERCC4 domain-containing protein EP364R</fullName>
        <shortName>pEP364R</shortName>
        <ecNumber evidence="1">3.1.4.-</ecNumber>
    </recommendedName>
</protein>
<feature type="chain" id="PRO_0000373670" description="ERCC4 domain-containing protein EP364R">
    <location>
        <begin position="1"/>
        <end position="366"/>
    </location>
</feature>
<feature type="domain" description="ERCC4">
    <location>
        <begin position="3"/>
        <end position="101"/>
    </location>
</feature>
<feature type="region of interest" description="Disordered" evidence="2">
    <location>
        <begin position="320"/>
        <end position="366"/>
    </location>
</feature>
<feature type="compositionally biased region" description="Polar residues" evidence="2">
    <location>
        <begin position="320"/>
        <end position="331"/>
    </location>
</feature>
<feature type="compositionally biased region" description="Polar residues" evidence="2">
    <location>
        <begin position="349"/>
        <end position="366"/>
    </location>
</feature>
<gene>
    <name type="ordered locus">War-069</name>
</gene>
<sequence>MYFLVADHREHHVIPFLKTDFHHMHQNPIQKNQALLEIKQLFTGDYLICKSPSTILACIERKTYKDFAASLKDGRYKNRQKMLSLREQTNCQLYFFVEGPAFPNPQKKINHVAYASIITAMTHLMVRDHMFVIQTKNEAHSSQKLVQLFYAFSKEMVCVVPTSLTPTDEELCIKLWSSLSGISGVIGKILANTCSVAHLVSGKLPSQNIDQLKTPSNRPFPKKVKRMLISISKGNKELEIKLLSGVPNIGKKLAAEILKDHALLFFLNQPVECLANIQIAQKTRTIKLGMKRAEAIHYFLNWCGSAHVTVDSQNITEASRPTMQVATQPAATQPLHKVSDDASSDASSPTGHQTLSKEMSLNTVRC</sequence>